<sequence length="205" mass="23856">MYGNVGLATARGSGTNGYVTRNTAHLRIREGPPGGQPYGSGYDALLESVSKPPIHRAPDQGILEHERKRRVEVKVMELRDELEEKGMEEDDIEEECSKLRQKLTAQPEQLGGRGLDTHSLAAAKEIEMSRLQRALGVSVNHEEGRAFKRETEEEKAARLAKREERERERIEAAITRERENEKRKQEWEEKERLRRREEYKRRRRD</sequence>
<accession>P0CM94</accession>
<accession>Q55PK5</accession>
<accession>Q5KDV1</accession>
<name>CWC21_CRYNJ</name>
<gene>
    <name type="primary">CWC21</name>
    <name type="ordered locus">CNG02690</name>
</gene>
<dbReference type="EMBL" id="AE017347">
    <property type="protein sequence ID" value="AAW44625.1"/>
    <property type="molecule type" value="Genomic_DNA"/>
</dbReference>
<dbReference type="RefSeq" id="XP_571932.1">
    <property type="nucleotide sequence ID" value="XM_571932.1"/>
</dbReference>
<dbReference type="SMR" id="P0CM94"/>
<dbReference type="STRING" id="214684.P0CM94"/>
<dbReference type="PaxDb" id="214684-P0CM94"/>
<dbReference type="EnsemblFungi" id="AAW44625">
    <property type="protein sequence ID" value="AAW44625"/>
    <property type="gene ID" value="CNG02690"/>
</dbReference>
<dbReference type="GeneID" id="3258528"/>
<dbReference type="KEGG" id="cne:CNG02690"/>
<dbReference type="VEuPathDB" id="FungiDB:CNG02690"/>
<dbReference type="eggNOG" id="KOG1869">
    <property type="taxonomic scope" value="Eukaryota"/>
</dbReference>
<dbReference type="HOGENOM" id="CLU_067891_1_1_1"/>
<dbReference type="InParanoid" id="P0CM94"/>
<dbReference type="OMA" id="LAHMRPR"/>
<dbReference type="OrthoDB" id="10267305at2759"/>
<dbReference type="Proteomes" id="UP000002149">
    <property type="component" value="Chromosome 7"/>
</dbReference>
<dbReference type="GO" id="GO:0005737">
    <property type="term" value="C:cytoplasm"/>
    <property type="evidence" value="ECO:0007669"/>
    <property type="project" value="UniProtKB-SubCell"/>
</dbReference>
<dbReference type="GO" id="GO:0005681">
    <property type="term" value="C:spliceosomal complex"/>
    <property type="evidence" value="ECO:0007669"/>
    <property type="project" value="UniProtKB-KW"/>
</dbReference>
<dbReference type="GO" id="GO:0006397">
    <property type="term" value="P:mRNA processing"/>
    <property type="evidence" value="ECO:0007669"/>
    <property type="project" value="UniProtKB-KW"/>
</dbReference>
<dbReference type="GO" id="GO:0008380">
    <property type="term" value="P:RNA splicing"/>
    <property type="evidence" value="ECO:0007669"/>
    <property type="project" value="UniProtKB-KW"/>
</dbReference>
<dbReference type="CDD" id="cd21372">
    <property type="entry name" value="cwf21_CWC21-like"/>
    <property type="match status" value="1"/>
</dbReference>
<dbReference type="Gene3D" id="6.10.140.420">
    <property type="match status" value="1"/>
</dbReference>
<dbReference type="InterPro" id="IPR051372">
    <property type="entry name" value="CWC21"/>
</dbReference>
<dbReference type="InterPro" id="IPR013170">
    <property type="entry name" value="mRNA_splic_Cwf21_dom"/>
</dbReference>
<dbReference type="PANTHER" id="PTHR36562">
    <property type="entry name" value="SERINE/ARGININE REPETITIVE MATRIX 2"/>
    <property type="match status" value="1"/>
</dbReference>
<dbReference type="PANTHER" id="PTHR36562:SF5">
    <property type="entry name" value="SERINE_ARGININE REPETITIVE MATRIX 2"/>
    <property type="match status" value="1"/>
</dbReference>
<dbReference type="Pfam" id="PF08312">
    <property type="entry name" value="cwf21"/>
    <property type="match status" value="1"/>
</dbReference>
<dbReference type="SMART" id="SM01115">
    <property type="entry name" value="cwf21"/>
    <property type="match status" value="1"/>
</dbReference>
<protein>
    <recommendedName>
        <fullName>Pre-mRNA-splicing factor CWC21</fullName>
    </recommendedName>
</protein>
<reference key="1">
    <citation type="journal article" date="2005" name="Science">
        <title>The genome of the basidiomycetous yeast and human pathogen Cryptococcus neoformans.</title>
        <authorList>
            <person name="Loftus B.J."/>
            <person name="Fung E."/>
            <person name="Roncaglia P."/>
            <person name="Rowley D."/>
            <person name="Amedeo P."/>
            <person name="Bruno D."/>
            <person name="Vamathevan J."/>
            <person name="Miranda M."/>
            <person name="Anderson I.J."/>
            <person name="Fraser J.A."/>
            <person name="Allen J.E."/>
            <person name="Bosdet I.E."/>
            <person name="Brent M.R."/>
            <person name="Chiu R."/>
            <person name="Doering T.L."/>
            <person name="Donlin M.J."/>
            <person name="D'Souza C.A."/>
            <person name="Fox D.S."/>
            <person name="Grinberg V."/>
            <person name="Fu J."/>
            <person name="Fukushima M."/>
            <person name="Haas B.J."/>
            <person name="Huang J.C."/>
            <person name="Janbon G."/>
            <person name="Jones S.J.M."/>
            <person name="Koo H.L."/>
            <person name="Krzywinski M.I."/>
            <person name="Kwon-Chung K.J."/>
            <person name="Lengeler K.B."/>
            <person name="Maiti R."/>
            <person name="Marra M.A."/>
            <person name="Marra R.E."/>
            <person name="Mathewson C.A."/>
            <person name="Mitchell T.G."/>
            <person name="Pertea M."/>
            <person name="Riggs F.R."/>
            <person name="Salzberg S.L."/>
            <person name="Schein J.E."/>
            <person name="Shvartsbeyn A."/>
            <person name="Shin H."/>
            <person name="Shumway M."/>
            <person name="Specht C.A."/>
            <person name="Suh B.B."/>
            <person name="Tenney A."/>
            <person name="Utterback T.R."/>
            <person name="Wickes B.L."/>
            <person name="Wortman J.R."/>
            <person name="Wye N.H."/>
            <person name="Kronstad J.W."/>
            <person name="Lodge J.K."/>
            <person name="Heitman J."/>
            <person name="Davis R.W."/>
            <person name="Fraser C.M."/>
            <person name="Hyman R.W."/>
        </authorList>
    </citation>
    <scope>NUCLEOTIDE SEQUENCE [LARGE SCALE GENOMIC DNA]</scope>
    <source>
        <strain>JEC21 / ATCC MYA-565</strain>
    </source>
</reference>
<proteinExistence type="inferred from homology"/>
<organism>
    <name type="scientific">Cryptococcus neoformans var. neoformans serotype D (strain JEC21 / ATCC MYA-565)</name>
    <name type="common">Filobasidiella neoformans</name>
    <dbReference type="NCBI Taxonomy" id="214684"/>
    <lineage>
        <taxon>Eukaryota</taxon>
        <taxon>Fungi</taxon>
        <taxon>Dikarya</taxon>
        <taxon>Basidiomycota</taxon>
        <taxon>Agaricomycotina</taxon>
        <taxon>Tremellomycetes</taxon>
        <taxon>Tremellales</taxon>
        <taxon>Cryptococcaceae</taxon>
        <taxon>Cryptococcus</taxon>
        <taxon>Cryptococcus neoformans species complex</taxon>
    </lineage>
</organism>
<comment type="function">
    <text evidence="1">Involved in pre-mRNA splicing. May function at or prior to the first catalytic step of splicing at the catalytic center of the spliceosome. May do so by stabilizing the catalytic center or the position of the RNA substrate (By similarity).</text>
</comment>
<comment type="subunit">
    <text evidence="1">Associates with the NTC complex (or PRP19-associated complex). The NTC complex associates with the spliceosome after the release of the U1 and U4 snRNAs and forms the CWC spliceosome subcomplex reminiscent of a late-stage spliceosome.</text>
</comment>
<comment type="subcellular location">
    <subcellularLocation>
        <location evidence="1">Cytoplasm</location>
    </subcellularLocation>
    <subcellularLocation>
        <location evidence="1">Nucleus</location>
    </subcellularLocation>
</comment>
<comment type="similarity">
    <text evidence="4">Belongs to the CWC21 family.</text>
</comment>
<evidence type="ECO:0000250" key="1"/>
<evidence type="ECO:0000255" key="2"/>
<evidence type="ECO:0000256" key="3">
    <source>
        <dbReference type="SAM" id="MobiDB-lite"/>
    </source>
</evidence>
<evidence type="ECO:0000305" key="4"/>
<feature type="chain" id="PRO_0000123497" description="Pre-mRNA-splicing factor CWC21">
    <location>
        <begin position="1"/>
        <end position="205"/>
    </location>
</feature>
<feature type="domain" description="CWF21" evidence="2">
    <location>
        <begin position="63"/>
        <end position="106"/>
    </location>
</feature>
<feature type="region of interest" description="Disordered" evidence="3">
    <location>
        <begin position="143"/>
        <end position="205"/>
    </location>
</feature>
<feature type="coiled-coil region" evidence="2">
    <location>
        <begin position="63"/>
        <end position="103"/>
    </location>
</feature>
<feature type="coiled-coil region" evidence="2">
    <location>
        <begin position="148"/>
        <end position="190"/>
    </location>
</feature>
<keyword id="KW-0175">Coiled coil</keyword>
<keyword id="KW-0963">Cytoplasm</keyword>
<keyword id="KW-0507">mRNA processing</keyword>
<keyword id="KW-0508">mRNA splicing</keyword>
<keyword id="KW-0539">Nucleus</keyword>
<keyword id="KW-1185">Reference proteome</keyword>
<keyword id="KW-0747">Spliceosome</keyword>